<protein>
    <recommendedName>
        <fullName evidence="9">sn-glycerol-3-phosphate transport system permease protein UgpE</fullName>
    </recommendedName>
</protein>
<sequence length="281" mass="31500">MIENRPWLTIFSHTMLILGIAVILFPLYVAFVAATLDKQAVYAAPMTLIPGTHLLENIHNIWVNGVGTNSAPFWRMLLNSFVMAFSITLGKITVSMLSAFAIVWFRFPLRNLFFWMIFITLMLPVEVRIFPTVEVIANLQMLDSYAGLTLPLMASATATFLFRQFFMTLPDELVEAARIDGASPMRFFCDIVFPLSKTNLAALFVITFIYGWNQYLWPLLIITDVDLGTTVAGIKGMIATGEGTTEWNSVMVAMLLTLIPPVVIVLVMQRAFVRGLVDSEK</sequence>
<comment type="function">
    <text evidence="4 6 7 9">Part of the ABC transporter complex UgpBAEC involved in sn-glycerol-3-phosphate (G3P) import (PubMed:23013274, PubMed:2842304). Probably responsible for the translocation of the substrate across the membrane (Probable). Can also transport glycerophosphoryl diesters, which are hydrolyzed to G3P and alcohol during transport (PubMed:2842304). The G3P moiety can be detected in the cytoplasm whereas the corresponding alcohol is usually found in the culture medium (PubMed:2842304). It was proposed by Yang et al that the complex could also transport glycerol-2-phosphate (G2P) in vivo, but it was shown later by Wuttge et al that UgpB does not bind G2P, questioning this transport activity (PubMed:19429609, PubMed:23013274). G2P might be converted in the periplasm to G3P before its transport (PubMed:23013274).</text>
</comment>
<comment type="subunit">
    <text evidence="6 10">The complex is composed of two ATP-binding proteins (UgpC), two transmembrane proteins (UgpA and UgpE) and a solute-binding protein (UgpB).</text>
</comment>
<comment type="subcellular location">
    <subcellularLocation>
        <location evidence="3">Cell inner membrane</location>
        <topology evidence="1">Multi-pass membrane protein</topology>
    </subcellularLocation>
</comment>
<comment type="induction">
    <text evidence="5">Induced by phosphate starvation, via PhoB (PubMed:1987150). Also induced by carbon starvation, via the cAMP receptor protein (CRP) (PubMed:1987150).</text>
</comment>
<comment type="disruption phenotype">
    <text evidence="4">Mutant lacking this gene fails to grow on both glycerol-3-phosphate and glycerol-2-phosphate.</text>
</comment>
<comment type="similarity">
    <text evidence="9">Belongs to the binding-protein-dependent transport system permease family. UgpAE subfamily.</text>
</comment>
<feature type="chain" id="PRO_0000060233" description="sn-glycerol-3-phosphate transport system permease protein UgpE">
    <location>
        <begin position="1"/>
        <end position="281"/>
    </location>
</feature>
<feature type="transmembrane region" description="Helical" evidence="1">
    <location>
        <begin position="16"/>
        <end position="36"/>
    </location>
</feature>
<feature type="transmembrane region" description="Helical" evidence="1">
    <location>
        <begin position="85"/>
        <end position="105"/>
    </location>
</feature>
<feature type="transmembrane region" description="Helical" evidence="1">
    <location>
        <begin position="113"/>
        <end position="133"/>
    </location>
</feature>
<feature type="transmembrane region" description="Helical" evidence="1">
    <location>
        <begin position="142"/>
        <end position="162"/>
    </location>
</feature>
<feature type="transmembrane region" description="Helical" evidence="1">
    <location>
        <begin position="202"/>
        <end position="222"/>
    </location>
</feature>
<feature type="transmembrane region" description="Helical" evidence="1">
    <location>
        <begin position="247"/>
        <end position="267"/>
    </location>
</feature>
<feature type="domain" description="ABC transmembrane type-1" evidence="2">
    <location>
        <begin position="77"/>
        <end position="268"/>
    </location>
</feature>
<reference key="1">
    <citation type="journal article" date="1988" name="Mol. Microbiol.">
        <title>Nucleotide sequence of the ugp genes of Escherichia coli K-12: homology to the maltose system.</title>
        <authorList>
            <person name="Overduin P."/>
            <person name="Boos W."/>
            <person name="Tommassen J."/>
        </authorList>
    </citation>
    <scope>NUCLEOTIDE SEQUENCE [GENOMIC DNA]</scope>
    <source>
        <strain>K12</strain>
    </source>
</reference>
<reference key="2">
    <citation type="journal article" date="1994" name="Nucleic Acids Res.">
        <title>Analysis of the Escherichia coli genome. V. DNA sequence of the region from 76.0 to 81.5 minutes.</title>
        <authorList>
            <person name="Sofia H.J."/>
            <person name="Burland V."/>
            <person name="Daniels D.L."/>
            <person name="Plunkett G. III"/>
            <person name="Blattner F.R."/>
        </authorList>
    </citation>
    <scope>NUCLEOTIDE SEQUENCE [LARGE SCALE GENOMIC DNA]</scope>
    <source>
        <strain>K12 / MG1655 / ATCC 47076</strain>
    </source>
</reference>
<reference key="3">
    <citation type="journal article" date="1997" name="Science">
        <title>The complete genome sequence of Escherichia coli K-12.</title>
        <authorList>
            <person name="Blattner F.R."/>
            <person name="Plunkett G. III"/>
            <person name="Bloch C.A."/>
            <person name="Perna N.T."/>
            <person name="Burland V."/>
            <person name="Riley M."/>
            <person name="Collado-Vides J."/>
            <person name="Glasner J.D."/>
            <person name="Rode C.K."/>
            <person name="Mayhew G.F."/>
            <person name="Gregor J."/>
            <person name="Davis N.W."/>
            <person name="Kirkpatrick H.A."/>
            <person name="Goeden M.A."/>
            <person name="Rose D.J."/>
            <person name="Mau B."/>
            <person name="Shao Y."/>
        </authorList>
    </citation>
    <scope>NUCLEOTIDE SEQUENCE [LARGE SCALE GENOMIC DNA]</scope>
    <source>
        <strain>K12 / MG1655 / ATCC 47076</strain>
    </source>
</reference>
<reference key="4">
    <citation type="journal article" date="2006" name="Mol. Syst. Biol.">
        <title>Highly accurate genome sequences of Escherichia coli K-12 strains MG1655 and W3110.</title>
        <authorList>
            <person name="Hayashi K."/>
            <person name="Morooka N."/>
            <person name="Yamamoto Y."/>
            <person name="Fujita K."/>
            <person name="Isono K."/>
            <person name="Choi S."/>
            <person name="Ohtsubo E."/>
            <person name="Baba T."/>
            <person name="Wanner B.L."/>
            <person name="Mori H."/>
            <person name="Horiuchi T."/>
        </authorList>
    </citation>
    <scope>NUCLEOTIDE SEQUENCE [LARGE SCALE GENOMIC DNA]</scope>
    <source>
        <strain>K12 / W3110 / ATCC 27325 / DSM 5911</strain>
    </source>
</reference>
<reference key="5">
    <citation type="journal article" date="1988" name="J. Bacteriol.">
        <title>Characteristics of a ugp-encoded and phoB-dependent glycerophosphoryl diester phosphodiesterase which is physically dependent on the ugp transport system of Escherichia coli.</title>
        <authorList>
            <person name="Brzoska P."/>
            <person name="Boos W."/>
        </authorList>
    </citation>
    <scope>FUNCTION IN SN-GLYCEROL-3-PHOSPHATE AND GLYCEROPHOSPHORYL DIESTERS TRANSPORT</scope>
    <source>
        <strain>K12</strain>
    </source>
</reference>
<reference key="6">
    <citation type="journal article" date="1991" name="J. Bacteriol.">
        <title>Dual regulation of the ugp operon by phosphate and carbon starvation at two interspaced promoters.</title>
        <authorList>
            <person name="Kasahara M."/>
            <person name="Makino K."/>
            <person name="Amemura M."/>
            <person name="Nakata A."/>
            <person name="Shinagawa H."/>
        </authorList>
    </citation>
    <scope>TRANSCRIPTIONAL REGULATION BY PHOB AND CRP</scope>
    <source>
        <strain>K12</strain>
    </source>
</reference>
<reference key="7">
    <citation type="journal article" date="2005" name="Science">
        <title>Global topology analysis of the Escherichia coli inner membrane proteome.</title>
        <authorList>
            <person name="Daley D.O."/>
            <person name="Rapp M."/>
            <person name="Granseth E."/>
            <person name="Melen K."/>
            <person name="Drew D."/>
            <person name="von Heijne G."/>
        </authorList>
    </citation>
    <scope>SUBCELLULAR LOCATION</scope>
    <source>
        <strain>K12 / MG1655 / ATCC 47076</strain>
    </source>
</reference>
<reference key="8">
    <citation type="journal article" date="2009" name="J. Bacteriol.">
        <title>Uptake of glycerol-2-phosphate via the ugp-encoded transporter in Escherichia coli K-12.</title>
        <authorList>
            <person name="Yang K."/>
            <person name="Wang M."/>
            <person name="Metcalf W.W."/>
        </authorList>
    </citation>
    <scope>FUNCTION IN GLYCEROL-2-PHOSPHATE TRANSPORT</scope>
    <scope>DISRUPTION PHENOTYPE</scope>
</reference>
<reference key="9">
    <citation type="journal article" date="2012" name="Mol. Microbiol.">
        <title>Determinants of substrate specificity and biochemical properties of the sn-glycerol-3-phosphate ATP binding cassette transporter (UgpB-AEC2) of Escherichia coli.</title>
        <authorList>
            <person name="Wuttge S."/>
            <person name="Bommer M."/>
            <person name="Jaeger F."/>
            <person name="Martins B.M."/>
            <person name="Jacob S."/>
            <person name="Licht A."/>
            <person name="Scheffel F."/>
            <person name="Dobbek H."/>
            <person name="Schneider E."/>
        </authorList>
    </citation>
    <scope>FUNCTION</scope>
    <scope>SUBUNIT</scope>
</reference>
<accession>P10906</accession>
<accession>Q2M7B4</accession>
<proteinExistence type="evidence at protein level"/>
<keyword id="KW-0997">Cell inner membrane</keyword>
<keyword id="KW-1003">Cell membrane</keyword>
<keyword id="KW-0472">Membrane</keyword>
<keyword id="KW-1185">Reference proteome</keyword>
<keyword id="KW-0812">Transmembrane</keyword>
<keyword id="KW-1133">Transmembrane helix</keyword>
<keyword id="KW-0813">Transport</keyword>
<organism>
    <name type="scientific">Escherichia coli (strain K12)</name>
    <dbReference type="NCBI Taxonomy" id="83333"/>
    <lineage>
        <taxon>Bacteria</taxon>
        <taxon>Pseudomonadati</taxon>
        <taxon>Pseudomonadota</taxon>
        <taxon>Gammaproteobacteria</taxon>
        <taxon>Enterobacterales</taxon>
        <taxon>Enterobacteriaceae</taxon>
        <taxon>Escherichia</taxon>
    </lineage>
</organism>
<gene>
    <name evidence="8" type="primary">ugpE</name>
    <name type="ordered locus">b3451</name>
    <name type="ordered locus">JW3416</name>
</gene>
<name>UGPE_ECOLI</name>
<evidence type="ECO:0000255" key="1"/>
<evidence type="ECO:0000255" key="2">
    <source>
        <dbReference type="PROSITE-ProRule" id="PRU00441"/>
    </source>
</evidence>
<evidence type="ECO:0000269" key="3">
    <source>
    </source>
</evidence>
<evidence type="ECO:0000269" key="4">
    <source>
    </source>
</evidence>
<evidence type="ECO:0000269" key="5">
    <source>
    </source>
</evidence>
<evidence type="ECO:0000269" key="6">
    <source>
    </source>
</evidence>
<evidence type="ECO:0000269" key="7">
    <source>
    </source>
</evidence>
<evidence type="ECO:0000303" key="8">
    <source>
    </source>
</evidence>
<evidence type="ECO:0000305" key="9"/>
<evidence type="ECO:0000305" key="10">
    <source>
    </source>
</evidence>
<dbReference type="EMBL" id="X13141">
    <property type="protein sequence ID" value="CAA31533.1"/>
    <property type="molecule type" value="Genomic_DNA"/>
</dbReference>
<dbReference type="EMBL" id="U00039">
    <property type="protein sequence ID" value="AAB18426.1"/>
    <property type="molecule type" value="Genomic_DNA"/>
</dbReference>
<dbReference type="EMBL" id="U00096">
    <property type="protein sequence ID" value="AAC76476.1"/>
    <property type="molecule type" value="Genomic_DNA"/>
</dbReference>
<dbReference type="EMBL" id="AP009048">
    <property type="protein sequence ID" value="BAE77842.1"/>
    <property type="molecule type" value="Genomic_DNA"/>
</dbReference>
<dbReference type="PIR" id="S03782">
    <property type="entry name" value="MMECUE"/>
</dbReference>
<dbReference type="RefSeq" id="NP_417908.1">
    <property type="nucleotide sequence ID" value="NC_000913.3"/>
</dbReference>
<dbReference type="RefSeq" id="WP_000572177.1">
    <property type="nucleotide sequence ID" value="NZ_LN832404.1"/>
</dbReference>
<dbReference type="SMR" id="P10906"/>
<dbReference type="BioGRID" id="4261664">
    <property type="interactions" value="250"/>
</dbReference>
<dbReference type="ComplexPortal" id="CPX-2150">
    <property type="entry name" value="sn-glycerol-3-phosphate ABC transporter complex"/>
</dbReference>
<dbReference type="FunCoup" id="P10906">
    <property type="interactions" value="383"/>
</dbReference>
<dbReference type="IntAct" id="P10906">
    <property type="interactions" value="1"/>
</dbReference>
<dbReference type="STRING" id="511145.b3451"/>
<dbReference type="TCDB" id="3.A.1.1.3">
    <property type="family name" value="the atp-binding cassette (abc) superfamily"/>
</dbReference>
<dbReference type="PaxDb" id="511145-b3451"/>
<dbReference type="EnsemblBacteria" id="AAC76476">
    <property type="protein sequence ID" value="AAC76476"/>
    <property type="gene ID" value="b3451"/>
</dbReference>
<dbReference type="GeneID" id="947959"/>
<dbReference type="KEGG" id="ecj:JW3416"/>
<dbReference type="KEGG" id="eco:b3451"/>
<dbReference type="KEGG" id="ecoc:C3026_18690"/>
<dbReference type="PATRIC" id="fig|1411691.4.peg.3276"/>
<dbReference type="EchoBASE" id="EB1042"/>
<dbReference type="eggNOG" id="COG0395">
    <property type="taxonomic scope" value="Bacteria"/>
</dbReference>
<dbReference type="HOGENOM" id="CLU_016047_1_1_6"/>
<dbReference type="InParanoid" id="P10906"/>
<dbReference type="OMA" id="FIAWNDF"/>
<dbReference type="OrthoDB" id="369039at2"/>
<dbReference type="PhylomeDB" id="P10906"/>
<dbReference type="BioCyc" id="EcoCyc:UGPE-MONOMER"/>
<dbReference type="BioCyc" id="MetaCyc:UGPE-MONOMER"/>
<dbReference type="BRENDA" id="7.6.2.10">
    <property type="organism ID" value="2026"/>
</dbReference>
<dbReference type="PRO" id="PR:P10906"/>
<dbReference type="Proteomes" id="UP000000625">
    <property type="component" value="Chromosome"/>
</dbReference>
<dbReference type="GO" id="GO:0055052">
    <property type="term" value="C:ATP-binding cassette (ABC) transporter complex, substrate-binding subunit-containing"/>
    <property type="evidence" value="ECO:0000314"/>
    <property type="project" value="EcoCyc"/>
</dbReference>
<dbReference type="GO" id="GO:1902517">
    <property type="term" value="C:glycerol-3-phosphate-transporting ATPase complex"/>
    <property type="evidence" value="ECO:0000353"/>
    <property type="project" value="ComplexPortal"/>
</dbReference>
<dbReference type="GO" id="GO:0016020">
    <property type="term" value="C:membrane"/>
    <property type="evidence" value="ECO:0000314"/>
    <property type="project" value="ComplexPortal"/>
</dbReference>
<dbReference type="GO" id="GO:0005886">
    <property type="term" value="C:plasma membrane"/>
    <property type="evidence" value="ECO:0000314"/>
    <property type="project" value="EcoCyc"/>
</dbReference>
<dbReference type="GO" id="GO:0015169">
    <property type="term" value="F:glycerol-3-phosphate transmembrane transporter activity"/>
    <property type="evidence" value="ECO:0000314"/>
    <property type="project" value="EcoCyc"/>
</dbReference>
<dbReference type="GO" id="GO:0015794">
    <property type="term" value="P:glycerol-3-phosphate transmembrane transport"/>
    <property type="evidence" value="ECO:0000314"/>
    <property type="project" value="ComplexPortal"/>
</dbReference>
<dbReference type="CDD" id="cd06261">
    <property type="entry name" value="TM_PBP2"/>
    <property type="match status" value="1"/>
</dbReference>
<dbReference type="FunFam" id="1.10.3720.10:FF:000042">
    <property type="entry name" value="sn-glycerol-3-phosphate transport system permease protein UgpE"/>
    <property type="match status" value="1"/>
</dbReference>
<dbReference type="Gene3D" id="1.10.3720.10">
    <property type="entry name" value="MetI-like"/>
    <property type="match status" value="1"/>
</dbReference>
<dbReference type="InterPro" id="IPR000515">
    <property type="entry name" value="MetI-like"/>
</dbReference>
<dbReference type="InterPro" id="IPR035906">
    <property type="entry name" value="MetI-like_sf"/>
</dbReference>
<dbReference type="NCBIfam" id="NF008210">
    <property type="entry name" value="PRK10973.1"/>
    <property type="match status" value="1"/>
</dbReference>
<dbReference type="PANTHER" id="PTHR43744">
    <property type="entry name" value="ABC TRANSPORTER PERMEASE PROTEIN MG189-RELATED-RELATED"/>
    <property type="match status" value="1"/>
</dbReference>
<dbReference type="PANTHER" id="PTHR43744:SF8">
    <property type="entry name" value="SN-GLYCEROL-3-PHOSPHATE TRANSPORT SYSTEM PERMEASE PROTEIN UGPE"/>
    <property type="match status" value="1"/>
</dbReference>
<dbReference type="Pfam" id="PF00528">
    <property type="entry name" value="BPD_transp_1"/>
    <property type="match status" value="1"/>
</dbReference>
<dbReference type="SUPFAM" id="SSF161098">
    <property type="entry name" value="MetI-like"/>
    <property type="match status" value="1"/>
</dbReference>
<dbReference type="PROSITE" id="PS50928">
    <property type="entry name" value="ABC_TM1"/>
    <property type="match status" value="1"/>
</dbReference>